<feature type="chain" id="PRO_0000070786" description="Chaperone protein DnaJ">
    <location>
        <begin position="1"/>
        <end position="371"/>
    </location>
</feature>
<feature type="domain" description="J" evidence="1">
    <location>
        <begin position="5"/>
        <end position="70"/>
    </location>
</feature>
<feature type="repeat" description="CXXCXGXG motif">
    <location>
        <begin position="140"/>
        <end position="147"/>
    </location>
</feature>
<feature type="repeat" description="CXXCXGXG motif">
    <location>
        <begin position="156"/>
        <end position="163"/>
    </location>
</feature>
<feature type="repeat" description="CXXCXGXG motif">
    <location>
        <begin position="178"/>
        <end position="185"/>
    </location>
</feature>
<feature type="repeat" description="CXXCXGXG motif">
    <location>
        <begin position="192"/>
        <end position="199"/>
    </location>
</feature>
<feature type="zinc finger region" description="CR-type" evidence="1">
    <location>
        <begin position="127"/>
        <end position="204"/>
    </location>
</feature>
<feature type="binding site" evidence="1">
    <location>
        <position position="140"/>
    </location>
    <ligand>
        <name>Zn(2+)</name>
        <dbReference type="ChEBI" id="CHEBI:29105"/>
        <label>1</label>
    </ligand>
</feature>
<feature type="binding site" evidence="1">
    <location>
        <position position="143"/>
    </location>
    <ligand>
        <name>Zn(2+)</name>
        <dbReference type="ChEBI" id="CHEBI:29105"/>
        <label>1</label>
    </ligand>
</feature>
<feature type="binding site" evidence="1">
    <location>
        <position position="156"/>
    </location>
    <ligand>
        <name>Zn(2+)</name>
        <dbReference type="ChEBI" id="CHEBI:29105"/>
        <label>2</label>
    </ligand>
</feature>
<feature type="binding site" evidence="1">
    <location>
        <position position="159"/>
    </location>
    <ligand>
        <name>Zn(2+)</name>
        <dbReference type="ChEBI" id="CHEBI:29105"/>
        <label>2</label>
    </ligand>
</feature>
<feature type="binding site" evidence="1">
    <location>
        <position position="178"/>
    </location>
    <ligand>
        <name>Zn(2+)</name>
        <dbReference type="ChEBI" id="CHEBI:29105"/>
        <label>2</label>
    </ligand>
</feature>
<feature type="binding site" evidence="1">
    <location>
        <position position="181"/>
    </location>
    <ligand>
        <name>Zn(2+)</name>
        <dbReference type="ChEBI" id="CHEBI:29105"/>
        <label>2</label>
    </ligand>
</feature>
<feature type="binding site" evidence="1">
    <location>
        <position position="192"/>
    </location>
    <ligand>
        <name>Zn(2+)</name>
        <dbReference type="ChEBI" id="CHEBI:29105"/>
        <label>1</label>
    </ligand>
</feature>
<feature type="binding site" evidence="1">
    <location>
        <position position="195"/>
    </location>
    <ligand>
        <name>Zn(2+)</name>
        <dbReference type="ChEBI" id="CHEBI:29105"/>
        <label>1</label>
    </ligand>
</feature>
<comment type="function">
    <text evidence="1">Participates actively in the response to hyperosmotic and heat shock by preventing the aggregation of stress-denatured proteins and by disaggregating proteins, also in an autonomous, DnaK-independent fashion. Unfolded proteins bind initially to DnaJ; upon interaction with the DnaJ-bound protein, DnaK hydrolyzes its bound ATP, resulting in the formation of a stable complex. GrpE releases ADP from DnaK; ATP binding to DnaK triggers the release of the substrate protein, thus completing the reaction cycle. Several rounds of ATP-dependent interactions between DnaJ, DnaK and GrpE are required for fully efficient folding. Also involved, together with DnaK and GrpE, in the DNA replication of plasmids through activation of initiation proteins.</text>
</comment>
<comment type="cofactor">
    <cofactor evidence="1">
        <name>Zn(2+)</name>
        <dbReference type="ChEBI" id="CHEBI:29105"/>
    </cofactor>
    <text evidence="1">Binds 2 Zn(2+) ions per monomer.</text>
</comment>
<comment type="subunit">
    <text evidence="1">Homodimer.</text>
</comment>
<comment type="subcellular location">
    <subcellularLocation>
        <location evidence="1">Cytoplasm</location>
    </subcellularLocation>
</comment>
<comment type="domain">
    <text evidence="1">The J domain is necessary and sufficient to stimulate DnaK ATPase activity. Zinc center 1 plays an important role in the autonomous, DnaK-independent chaperone activity of DnaJ. Zinc center 2 is essential for interaction with DnaK and for DnaJ activity.</text>
</comment>
<comment type="similarity">
    <text evidence="1">Belongs to the DnaJ family.</text>
</comment>
<organism>
    <name type="scientific">Francisella tularensis</name>
    <dbReference type="NCBI Taxonomy" id="263"/>
    <lineage>
        <taxon>Bacteria</taxon>
        <taxon>Pseudomonadati</taxon>
        <taxon>Pseudomonadota</taxon>
        <taxon>Gammaproteobacteria</taxon>
        <taxon>Thiotrichales</taxon>
        <taxon>Francisellaceae</taxon>
        <taxon>Francisella</taxon>
    </lineage>
</organism>
<accession>P48207</accession>
<keyword id="KW-0143">Chaperone</keyword>
<keyword id="KW-0963">Cytoplasm</keyword>
<keyword id="KW-0235">DNA replication</keyword>
<keyword id="KW-0479">Metal-binding</keyword>
<keyword id="KW-0677">Repeat</keyword>
<keyword id="KW-0346">Stress response</keyword>
<keyword id="KW-0862">Zinc</keyword>
<keyword id="KW-0863">Zinc-finger</keyword>
<name>DNAJ_FRATU</name>
<evidence type="ECO:0000255" key="1">
    <source>
        <dbReference type="HAMAP-Rule" id="MF_01152"/>
    </source>
</evidence>
<reference key="1">
    <citation type="journal article" date="1995" name="Gene">
        <title>Analysis of the DnaK molecular chaperone system of Francisella tularensis.</title>
        <authorList>
            <person name="Zuber M."/>
            <person name="Hoover T.A."/>
            <person name="Dertzbaugh M.T."/>
            <person name="Court D.L."/>
        </authorList>
    </citation>
    <scope>NUCLEOTIDE SEQUENCE [GENOMIC DNA]</scope>
</reference>
<dbReference type="EMBL" id="L43367">
    <property type="protein sequence ID" value="AAA69562.1"/>
    <property type="molecule type" value="Genomic_DNA"/>
</dbReference>
<dbReference type="RefSeq" id="WP_011457462.1">
    <property type="nucleotide sequence ID" value="NZ_VJLT01000039.1"/>
</dbReference>
<dbReference type="SMR" id="P48207"/>
<dbReference type="PATRIC" id="fig|263.100.peg.875"/>
<dbReference type="GO" id="GO:0005737">
    <property type="term" value="C:cytoplasm"/>
    <property type="evidence" value="ECO:0007669"/>
    <property type="project" value="UniProtKB-SubCell"/>
</dbReference>
<dbReference type="GO" id="GO:0005524">
    <property type="term" value="F:ATP binding"/>
    <property type="evidence" value="ECO:0007669"/>
    <property type="project" value="InterPro"/>
</dbReference>
<dbReference type="GO" id="GO:0031072">
    <property type="term" value="F:heat shock protein binding"/>
    <property type="evidence" value="ECO:0007669"/>
    <property type="project" value="InterPro"/>
</dbReference>
<dbReference type="GO" id="GO:0051082">
    <property type="term" value="F:unfolded protein binding"/>
    <property type="evidence" value="ECO:0007669"/>
    <property type="project" value="UniProtKB-UniRule"/>
</dbReference>
<dbReference type="GO" id="GO:0008270">
    <property type="term" value="F:zinc ion binding"/>
    <property type="evidence" value="ECO:0007669"/>
    <property type="project" value="UniProtKB-UniRule"/>
</dbReference>
<dbReference type="GO" id="GO:0051085">
    <property type="term" value="P:chaperone cofactor-dependent protein refolding"/>
    <property type="evidence" value="ECO:0007669"/>
    <property type="project" value="TreeGrafter"/>
</dbReference>
<dbReference type="GO" id="GO:0006260">
    <property type="term" value="P:DNA replication"/>
    <property type="evidence" value="ECO:0007669"/>
    <property type="project" value="UniProtKB-KW"/>
</dbReference>
<dbReference type="GO" id="GO:0042026">
    <property type="term" value="P:protein refolding"/>
    <property type="evidence" value="ECO:0007669"/>
    <property type="project" value="TreeGrafter"/>
</dbReference>
<dbReference type="GO" id="GO:0009408">
    <property type="term" value="P:response to heat"/>
    <property type="evidence" value="ECO:0007669"/>
    <property type="project" value="InterPro"/>
</dbReference>
<dbReference type="CDD" id="cd06257">
    <property type="entry name" value="DnaJ"/>
    <property type="match status" value="1"/>
</dbReference>
<dbReference type="CDD" id="cd10747">
    <property type="entry name" value="DnaJ_C"/>
    <property type="match status" value="1"/>
</dbReference>
<dbReference type="CDD" id="cd10719">
    <property type="entry name" value="DnaJ_zf"/>
    <property type="match status" value="1"/>
</dbReference>
<dbReference type="FunFam" id="1.10.287.110:FF:000034">
    <property type="entry name" value="Chaperone protein DnaJ"/>
    <property type="match status" value="1"/>
</dbReference>
<dbReference type="FunFam" id="2.10.230.10:FF:000002">
    <property type="entry name" value="Molecular chaperone DnaJ"/>
    <property type="match status" value="1"/>
</dbReference>
<dbReference type="FunFam" id="2.60.260.20:FF:000004">
    <property type="entry name" value="Molecular chaperone DnaJ"/>
    <property type="match status" value="1"/>
</dbReference>
<dbReference type="Gene3D" id="1.10.287.110">
    <property type="entry name" value="DnaJ domain"/>
    <property type="match status" value="1"/>
</dbReference>
<dbReference type="Gene3D" id="2.10.230.10">
    <property type="entry name" value="Heat shock protein DnaJ, cysteine-rich domain"/>
    <property type="match status" value="1"/>
</dbReference>
<dbReference type="Gene3D" id="2.60.260.20">
    <property type="entry name" value="Urease metallochaperone UreE, N-terminal domain"/>
    <property type="match status" value="2"/>
</dbReference>
<dbReference type="HAMAP" id="MF_01152">
    <property type="entry name" value="DnaJ"/>
    <property type="match status" value="1"/>
</dbReference>
<dbReference type="InterPro" id="IPR012724">
    <property type="entry name" value="DnaJ"/>
</dbReference>
<dbReference type="InterPro" id="IPR002939">
    <property type="entry name" value="DnaJ_C"/>
</dbReference>
<dbReference type="InterPro" id="IPR001623">
    <property type="entry name" value="DnaJ_domain"/>
</dbReference>
<dbReference type="InterPro" id="IPR018253">
    <property type="entry name" value="DnaJ_domain_CS"/>
</dbReference>
<dbReference type="InterPro" id="IPR008971">
    <property type="entry name" value="HSP40/DnaJ_pept-bd"/>
</dbReference>
<dbReference type="InterPro" id="IPR001305">
    <property type="entry name" value="HSP_DnaJ_Cys-rich_dom"/>
</dbReference>
<dbReference type="InterPro" id="IPR036410">
    <property type="entry name" value="HSP_DnaJ_Cys-rich_dom_sf"/>
</dbReference>
<dbReference type="InterPro" id="IPR036869">
    <property type="entry name" value="J_dom_sf"/>
</dbReference>
<dbReference type="NCBIfam" id="TIGR02349">
    <property type="entry name" value="DnaJ_bact"/>
    <property type="match status" value="1"/>
</dbReference>
<dbReference type="NCBIfam" id="NF008035">
    <property type="entry name" value="PRK10767.1"/>
    <property type="match status" value="1"/>
</dbReference>
<dbReference type="PANTHER" id="PTHR43096:SF48">
    <property type="entry name" value="CHAPERONE PROTEIN DNAJ"/>
    <property type="match status" value="1"/>
</dbReference>
<dbReference type="PANTHER" id="PTHR43096">
    <property type="entry name" value="DNAJ HOMOLOG 1, MITOCHONDRIAL-RELATED"/>
    <property type="match status" value="1"/>
</dbReference>
<dbReference type="Pfam" id="PF00226">
    <property type="entry name" value="DnaJ"/>
    <property type="match status" value="1"/>
</dbReference>
<dbReference type="Pfam" id="PF01556">
    <property type="entry name" value="DnaJ_C"/>
    <property type="match status" value="1"/>
</dbReference>
<dbReference type="Pfam" id="PF00684">
    <property type="entry name" value="DnaJ_CXXCXGXG"/>
    <property type="match status" value="1"/>
</dbReference>
<dbReference type="PRINTS" id="PR00625">
    <property type="entry name" value="JDOMAIN"/>
</dbReference>
<dbReference type="SMART" id="SM00271">
    <property type="entry name" value="DnaJ"/>
    <property type="match status" value="1"/>
</dbReference>
<dbReference type="SUPFAM" id="SSF46565">
    <property type="entry name" value="Chaperone J-domain"/>
    <property type="match status" value="1"/>
</dbReference>
<dbReference type="SUPFAM" id="SSF57938">
    <property type="entry name" value="DnaJ/Hsp40 cysteine-rich domain"/>
    <property type="match status" value="1"/>
</dbReference>
<dbReference type="SUPFAM" id="SSF49493">
    <property type="entry name" value="HSP40/DnaJ peptide-binding domain"/>
    <property type="match status" value="2"/>
</dbReference>
<dbReference type="PROSITE" id="PS00636">
    <property type="entry name" value="DNAJ_1"/>
    <property type="match status" value="1"/>
</dbReference>
<dbReference type="PROSITE" id="PS50076">
    <property type="entry name" value="DNAJ_2"/>
    <property type="match status" value="1"/>
</dbReference>
<dbReference type="PROSITE" id="PS51188">
    <property type="entry name" value="ZF_CR"/>
    <property type="match status" value="1"/>
</dbReference>
<sequence length="371" mass="41481">MQQKCYYEILNISKTASGVEIKRAYRKLAMKYHPDRNPGDKEAEIKFKEISEAYEILSDDSKRSRYDQFGHAGVNQQSGFGGTGGFEDIFDTFFGGGTSRGSNRSRASRGSDLEYTLEITLEEAFFGVEKEITIPRMESCDSCDGTGSKSRSKTTCHACHGQGTIRRQQGFFAFEQTCPVCNGTGYSITDPCDACYGNGKVKKQKTLKVKIPEGVDNGDRIRLQGEGDSGSNGAMNGDLYVQIIIKEHKIFERRDINLYCEMPISFTKACLGGDIKVPTLDGEVVLKVVPETQTGKVFRLREKGMKSLRGHRRGDLLCKVVVETPVNLSAEQKELLEKFADSLGEDYQSKHAPKSKTWFDNVKDYAKKFFE</sequence>
<protein>
    <recommendedName>
        <fullName evidence="1">Chaperone protein DnaJ</fullName>
    </recommendedName>
</protein>
<gene>
    <name evidence="1" type="primary">dnaJ</name>
</gene>
<proteinExistence type="inferred from homology"/>